<name>DNAK_ACTP7</name>
<accession>B3H2X7</accession>
<reference key="1">
    <citation type="submission" date="2008-06" db="EMBL/GenBank/DDBJ databases">
        <title>Genome and proteome analysis of A. pleuropneumoniae serotype 7.</title>
        <authorList>
            <person name="Linke B."/>
            <person name="Buettner F."/>
            <person name="Martinez-Arias R."/>
            <person name="Goesmann A."/>
            <person name="Baltes N."/>
            <person name="Tegetmeyer H."/>
            <person name="Singh M."/>
            <person name="Gerlach G.F."/>
        </authorList>
    </citation>
    <scope>NUCLEOTIDE SEQUENCE [LARGE SCALE GENOMIC DNA]</scope>
    <source>
        <strain>AP76</strain>
    </source>
</reference>
<sequence length="632" mass="67941">MGKIIGIDLGTTNSCVAVMDGDKARVIENAEGARTTPSIIAYTDNETLVGQPAKRQAITNPKNTLFAIKRLIGRRFESEEVQRDIKIMPFEITRADNGDAWVNVKGDKLAPPQISAEVLKKMKKTAEDFLGEAVTEAVITVPAYFNDAQRQATIDAGRIAGLDVKRIINEPTAAALAFGLGSTKENQVIAVYDLGGGTFDISIIEIDNFDGEQTFEVLATGGNTHLGGEDFDNRVIDYIIDEFKKEQGVDLRNDPMALQRVKEAAEKAKIELSSAQSTEVNLPYITADATGPKHLAINVTRAKLEALVEDLVASSIESLKTVLKDAGKSVNEINDIILVGGQTRMPLVQQKVAEFFGKEARKDVNPDEAVAIGAAVQGGVLKGDVKDVLLLDVTPLSLGIETMGGVMTVLIEKNTTIPTKKSQVFSTAEDNQSAVTIHVLQGERKQASANKSLGQFNLEGINPAPRGMPQIEVTFDIDANGVINVSAKDKNTGKEQQIRIQASSGLSDEEIEKMVRDAEANAEADKKFEELVQARNQADGIAHATRKQIEEAGDALNADDKAKIEAAIADLEKAAKGDDKAEIDAKTEALIKASEPLMQAAQAKAQAGEQPQQSAKDDGVVDAEFEEVKDNK</sequence>
<proteinExistence type="inferred from homology"/>
<organism>
    <name type="scientific">Actinobacillus pleuropneumoniae serotype 7 (strain AP76)</name>
    <dbReference type="NCBI Taxonomy" id="537457"/>
    <lineage>
        <taxon>Bacteria</taxon>
        <taxon>Pseudomonadati</taxon>
        <taxon>Pseudomonadota</taxon>
        <taxon>Gammaproteobacteria</taxon>
        <taxon>Pasteurellales</taxon>
        <taxon>Pasteurellaceae</taxon>
        <taxon>Actinobacillus</taxon>
    </lineage>
</organism>
<gene>
    <name evidence="1" type="primary">dnaK</name>
    <name type="ordered locus">APP7_1995</name>
</gene>
<comment type="function">
    <text evidence="1">Acts as a chaperone.</text>
</comment>
<comment type="induction">
    <text evidence="1">By stress conditions e.g. heat shock.</text>
</comment>
<comment type="similarity">
    <text evidence="1">Belongs to the heat shock protein 70 family.</text>
</comment>
<protein>
    <recommendedName>
        <fullName evidence="1">Chaperone protein DnaK</fullName>
    </recommendedName>
    <alternativeName>
        <fullName evidence="1">HSP70</fullName>
    </alternativeName>
    <alternativeName>
        <fullName evidence="1">Heat shock 70 kDa protein</fullName>
    </alternativeName>
    <alternativeName>
        <fullName evidence="1">Heat shock protein 70</fullName>
    </alternativeName>
</protein>
<feature type="chain" id="PRO_1000119658" description="Chaperone protein DnaK">
    <location>
        <begin position="1"/>
        <end position="632"/>
    </location>
</feature>
<feature type="region of interest" description="Disordered" evidence="2">
    <location>
        <begin position="601"/>
        <end position="632"/>
    </location>
</feature>
<feature type="compositionally biased region" description="Low complexity" evidence="2">
    <location>
        <begin position="601"/>
        <end position="613"/>
    </location>
</feature>
<feature type="modified residue" description="Phosphothreonine; by autocatalysis" evidence="1">
    <location>
        <position position="198"/>
    </location>
</feature>
<evidence type="ECO:0000255" key="1">
    <source>
        <dbReference type="HAMAP-Rule" id="MF_00332"/>
    </source>
</evidence>
<evidence type="ECO:0000256" key="2">
    <source>
        <dbReference type="SAM" id="MobiDB-lite"/>
    </source>
</evidence>
<dbReference type="EMBL" id="CP001091">
    <property type="protein sequence ID" value="ACE62647.1"/>
    <property type="molecule type" value="Genomic_DNA"/>
</dbReference>
<dbReference type="RefSeq" id="WP_005609378.1">
    <property type="nucleotide sequence ID" value="NC_010939.1"/>
</dbReference>
<dbReference type="SMR" id="B3H2X7"/>
<dbReference type="KEGG" id="apa:APP7_1995"/>
<dbReference type="HOGENOM" id="CLU_005965_2_1_6"/>
<dbReference type="Proteomes" id="UP000001226">
    <property type="component" value="Chromosome"/>
</dbReference>
<dbReference type="GO" id="GO:0005524">
    <property type="term" value="F:ATP binding"/>
    <property type="evidence" value="ECO:0007669"/>
    <property type="project" value="UniProtKB-UniRule"/>
</dbReference>
<dbReference type="GO" id="GO:0140662">
    <property type="term" value="F:ATP-dependent protein folding chaperone"/>
    <property type="evidence" value="ECO:0007669"/>
    <property type="project" value="InterPro"/>
</dbReference>
<dbReference type="GO" id="GO:0051082">
    <property type="term" value="F:unfolded protein binding"/>
    <property type="evidence" value="ECO:0007669"/>
    <property type="project" value="InterPro"/>
</dbReference>
<dbReference type="CDD" id="cd10234">
    <property type="entry name" value="ASKHA_NBD_HSP70_DnaK-like"/>
    <property type="match status" value="1"/>
</dbReference>
<dbReference type="FunFam" id="2.60.34.10:FF:000014">
    <property type="entry name" value="Chaperone protein DnaK HSP70"/>
    <property type="match status" value="1"/>
</dbReference>
<dbReference type="FunFam" id="3.30.30.30:FF:000003">
    <property type="entry name" value="Heat shock protein 9"/>
    <property type="match status" value="1"/>
</dbReference>
<dbReference type="FunFam" id="1.20.1270.10:FF:000001">
    <property type="entry name" value="Molecular chaperone DnaK"/>
    <property type="match status" value="1"/>
</dbReference>
<dbReference type="FunFam" id="3.30.420.40:FF:000004">
    <property type="entry name" value="Molecular chaperone DnaK"/>
    <property type="match status" value="1"/>
</dbReference>
<dbReference type="FunFam" id="3.90.640.10:FF:000003">
    <property type="entry name" value="Molecular chaperone DnaK"/>
    <property type="match status" value="1"/>
</dbReference>
<dbReference type="Gene3D" id="1.20.1270.10">
    <property type="match status" value="1"/>
</dbReference>
<dbReference type="Gene3D" id="3.30.420.40">
    <property type="match status" value="2"/>
</dbReference>
<dbReference type="Gene3D" id="3.90.640.10">
    <property type="entry name" value="Actin, Chain A, domain 4"/>
    <property type="match status" value="1"/>
</dbReference>
<dbReference type="Gene3D" id="2.60.34.10">
    <property type="entry name" value="Substrate Binding Domain Of DNAk, Chain A, domain 1"/>
    <property type="match status" value="1"/>
</dbReference>
<dbReference type="HAMAP" id="MF_00332">
    <property type="entry name" value="DnaK"/>
    <property type="match status" value="1"/>
</dbReference>
<dbReference type="InterPro" id="IPR043129">
    <property type="entry name" value="ATPase_NBD"/>
</dbReference>
<dbReference type="InterPro" id="IPR012725">
    <property type="entry name" value="Chaperone_DnaK"/>
</dbReference>
<dbReference type="InterPro" id="IPR018181">
    <property type="entry name" value="Heat_shock_70_CS"/>
</dbReference>
<dbReference type="InterPro" id="IPR029048">
    <property type="entry name" value="HSP70_C_sf"/>
</dbReference>
<dbReference type="InterPro" id="IPR029047">
    <property type="entry name" value="HSP70_peptide-bd_sf"/>
</dbReference>
<dbReference type="InterPro" id="IPR013126">
    <property type="entry name" value="Hsp_70_fam"/>
</dbReference>
<dbReference type="NCBIfam" id="NF001413">
    <property type="entry name" value="PRK00290.1"/>
    <property type="match status" value="1"/>
</dbReference>
<dbReference type="NCBIfam" id="TIGR02350">
    <property type="entry name" value="prok_dnaK"/>
    <property type="match status" value="1"/>
</dbReference>
<dbReference type="PANTHER" id="PTHR19375">
    <property type="entry name" value="HEAT SHOCK PROTEIN 70KDA"/>
    <property type="match status" value="1"/>
</dbReference>
<dbReference type="Pfam" id="PF00012">
    <property type="entry name" value="HSP70"/>
    <property type="match status" value="1"/>
</dbReference>
<dbReference type="PRINTS" id="PR00301">
    <property type="entry name" value="HEATSHOCK70"/>
</dbReference>
<dbReference type="SUPFAM" id="SSF53067">
    <property type="entry name" value="Actin-like ATPase domain"/>
    <property type="match status" value="2"/>
</dbReference>
<dbReference type="SUPFAM" id="SSF100934">
    <property type="entry name" value="Heat shock protein 70kD (HSP70), C-terminal subdomain"/>
    <property type="match status" value="1"/>
</dbReference>
<dbReference type="SUPFAM" id="SSF100920">
    <property type="entry name" value="Heat shock protein 70kD (HSP70), peptide-binding domain"/>
    <property type="match status" value="1"/>
</dbReference>
<dbReference type="PROSITE" id="PS00297">
    <property type="entry name" value="HSP70_1"/>
    <property type="match status" value="1"/>
</dbReference>
<dbReference type="PROSITE" id="PS00329">
    <property type="entry name" value="HSP70_2"/>
    <property type="match status" value="1"/>
</dbReference>
<dbReference type="PROSITE" id="PS01036">
    <property type="entry name" value="HSP70_3"/>
    <property type="match status" value="1"/>
</dbReference>
<keyword id="KW-0067">ATP-binding</keyword>
<keyword id="KW-0143">Chaperone</keyword>
<keyword id="KW-0547">Nucleotide-binding</keyword>
<keyword id="KW-0597">Phosphoprotein</keyword>
<keyword id="KW-0346">Stress response</keyword>